<protein>
    <recommendedName>
        <fullName evidence="1">Protein SprT-like</fullName>
    </recommendedName>
</protein>
<reference key="1">
    <citation type="journal article" date="2005" name="Proc. Natl. Acad. Sci. U.S.A.">
        <title>Whole genome sequence of Staphylococcus saprophyticus reveals the pathogenesis of uncomplicated urinary tract infection.</title>
        <authorList>
            <person name="Kuroda M."/>
            <person name="Yamashita A."/>
            <person name="Hirakawa H."/>
            <person name="Kumano M."/>
            <person name="Morikawa K."/>
            <person name="Higashide M."/>
            <person name="Maruyama A."/>
            <person name="Inose Y."/>
            <person name="Matoba K."/>
            <person name="Toh H."/>
            <person name="Kuhara S."/>
            <person name="Hattori M."/>
            <person name="Ohta T."/>
        </authorList>
    </citation>
    <scope>NUCLEOTIDE SEQUENCE [LARGE SCALE GENOMIC DNA]</scope>
    <source>
        <strain>ATCC 15305 / DSM 20229 / NCIMB 8711 / NCTC 7292 / S-41</strain>
    </source>
</reference>
<feature type="chain" id="PRO_0000213304" description="Protein SprT-like">
    <location>
        <begin position="1"/>
        <end position="152"/>
    </location>
</feature>
<feature type="domain" description="SprT-like" evidence="1">
    <location>
        <begin position="9"/>
        <end position="149"/>
    </location>
</feature>
<feature type="active site" evidence="1">
    <location>
        <position position="71"/>
    </location>
</feature>
<feature type="binding site" evidence="1">
    <location>
        <position position="70"/>
    </location>
    <ligand>
        <name>Zn(2+)</name>
        <dbReference type="ChEBI" id="CHEBI:29105"/>
    </ligand>
</feature>
<feature type="binding site" evidence="1">
    <location>
        <position position="74"/>
    </location>
    <ligand>
        <name>Zn(2+)</name>
        <dbReference type="ChEBI" id="CHEBI:29105"/>
    </ligand>
</feature>
<keyword id="KW-0963">Cytoplasm</keyword>
<keyword id="KW-0479">Metal-binding</keyword>
<keyword id="KW-1185">Reference proteome</keyword>
<keyword id="KW-0862">Zinc</keyword>
<organism>
    <name type="scientific">Staphylococcus saprophyticus subsp. saprophyticus (strain ATCC 15305 / DSM 20229 / NCIMB 8711 / NCTC 7292 / S-41)</name>
    <dbReference type="NCBI Taxonomy" id="342451"/>
    <lineage>
        <taxon>Bacteria</taxon>
        <taxon>Bacillati</taxon>
        <taxon>Bacillota</taxon>
        <taxon>Bacilli</taxon>
        <taxon>Bacillales</taxon>
        <taxon>Staphylococcaceae</taxon>
        <taxon>Staphylococcus</taxon>
    </lineage>
</organism>
<evidence type="ECO:0000255" key="1">
    <source>
        <dbReference type="HAMAP-Rule" id="MF_00745"/>
    </source>
</evidence>
<dbReference type="EMBL" id="AP008934">
    <property type="protein sequence ID" value="BAE17961.1"/>
    <property type="molecule type" value="Genomic_DNA"/>
</dbReference>
<dbReference type="KEGG" id="ssp:SSP0816"/>
<dbReference type="eggNOG" id="COG3091">
    <property type="taxonomic scope" value="Bacteria"/>
</dbReference>
<dbReference type="HOGENOM" id="CLU_123820_0_0_9"/>
<dbReference type="Proteomes" id="UP000006371">
    <property type="component" value="Chromosome"/>
</dbReference>
<dbReference type="GO" id="GO:0005737">
    <property type="term" value="C:cytoplasm"/>
    <property type="evidence" value="ECO:0007669"/>
    <property type="project" value="UniProtKB-SubCell"/>
</dbReference>
<dbReference type="GO" id="GO:0008270">
    <property type="term" value="F:zinc ion binding"/>
    <property type="evidence" value="ECO:0007669"/>
    <property type="project" value="UniProtKB-UniRule"/>
</dbReference>
<dbReference type="GO" id="GO:0006950">
    <property type="term" value="P:response to stress"/>
    <property type="evidence" value="ECO:0007669"/>
    <property type="project" value="UniProtKB-ARBA"/>
</dbReference>
<dbReference type="HAMAP" id="MF_00745">
    <property type="entry name" value="SprT_like"/>
    <property type="match status" value="1"/>
</dbReference>
<dbReference type="InterPro" id="IPR006640">
    <property type="entry name" value="SprT-like_domain"/>
</dbReference>
<dbReference type="InterPro" id="IPR035240">
    <property type="entry name" value="SprT_Zn_ribbon"/>
</dbReference>
<dbReference type="InterPro" id="IPR023524">
    <property type="entry name" value="Uncharacterised_SprT-like"/>
</dbReference>
<dbReference type="NCBIfam" id="NF003339">
    <property type="entry name" value="PRK04351.1"/>
    <property type="match status" value="1"/>
</dbReference>
<dbReference type="Pfam" id="PF10263">
    <property type="entry name" value="SprT-like"/>
    <property type="match status" value="1"/>
</dbReference>
<dbReference type="Pfam" id="PF17283">
    <property type="entry name" value="Zn_ribbon_SprT"/>
    <property type="match status" value="1"/>
</dbReference>
<dbReference type="SMART" id="SM00731">
    <property type="entry name" value="SprT"/>
    <property type="match status" value="1"/>
</dbReference>
<sequence length="152" mass="17999">MIQMDNSALQKLTETISLKYFKMPFKHKAYFNKRLRTTGGRYLLSSHNIEVNEKQFAKFGESAIIDIIKHELCHYHLHLQKKGYQHKDKDFKRLCQQTGAPRFCSAIEKYEDRVNYIYQCQKCASRFPRIRKVDTNKMVCGKCNGKLKELNN</sequence>
<comment type="cofactor">
    <cofactor evidence="1">
        <name>Zn(2+)</name>
        <dbReference type="ChEBI" id="CHEBI:29105"/>
    </cofactor>
    <text evidence="1">Binds 1 zinc ion.</text>
</comment>
<comment type="subcellular location">
    <subcellularLocation>
        <location evidence="1">Cytoplasm</location>
    </subcellularLocation>
</comment>
<comment type="similarity">
    <text evidence="1">Belongs to the SprT family.</text>
</comment>
<gene>
    <name type="ordered locus">SSP0816</name>
</gene>
<proteinExistence type="inferred from homology"/>
<name>SPRTL_STAS1</name>
<accession>Q49Z17</accession>